<feature type="chain" id="PRO_1000078721" description="V-type ATP synthase subunit D">
    <location>
        <begin position="1"/>
        <end position="207"/>
    </location>
</feature>
<protein>
    <recommendedName>
        <fullName evidence="1">V-type ATP synthase subunit D</fullName>
    </recommendedName>
    <alternativeName>
        <fullName evidence="1">V-ATPase subunit D</fullName>
    </alternativeName>
</protein>
<keyword id="KW-0066">ATP synthesis</keyword>
<keyword id="KW-0375">Hydrogen ion transport</keyword>
<keyword id="KW-0406">Ion transport</keyword>
<keyword id="KW-1185">Reference proteome</keyword>
<keyword id="KW-0813">Transport</keyword>
<comment type="function">
    <text evidence="1">Produces ATP from ADP in the presence of a proton gradient across the membrane.</text>
</comment>
<comment type="similarity">
    <text evidence="1">Belongs to the V-ATPase D subunit family.</text>
</comment>
<name>VATD_STRGC</name>
<proteinExistence type="inferred from homology"/>
<reference key="1">
    <citation type="journal article" date="2007" name="J. Bacteriol.">
        <title>Genome-wide transcriptional changes in Streptococcus gordonii in response to competence signaling peptide.</title>
        <authorList>
            <person name="Vickerman M.M."/>
            <person name="Iobst S."/>
            <person name="Jesionowski A.M."/>
            <person name="Gill S.R."/>
        </authorList>
    </citation>
    <scope>NUCLEOTIDE SEQUENCE [LARGE SCALE GENOMIC DNA]</scope>
    <source>
        <strain>Challis / ATCC 35105 / BCRC 15272 / CH1 / DL1 / V288</strain>
    </source>
</reference>
<dbReference type="EMBL" id="CP000725">
    <property type="protein sequence ID" value="ABV10739.1"/>
    <property type="molecule type" value="Genomic_DNA"/>
</dbReference>
<dbReference type="RefSeq" id="WP_004192619.1">
    <property type="nucleotide sequence ID" value="NC_009785.1"/>
</dbReference>
<dbReference type="SMR" id="A8AUJ9"/>
<dbReference type="STRING" id="467705.SGO_0137"/>
<dbReference type="KEGG" id="sgo:SGO_0137"/>
<dbReference type="eggNOG" id="COG1394">
    <property type="taxonomic scope" value="Bacteria"/>
</dbReference>
<dbReference type="HOGENOM" id="CLU_069688_2_1_9"/>
<dbReference type="Proteomes" id="UP000001131">
    <property type="component" value="Chromosome"/>
</dbReference>
<dbReference type="GO" id="GO:0005524">
    <property type="term" value="F:ATP binding"/>
    <property type="evidence" value="ECO:0007669"/>
    <property type="project" value="UniProtKB-UniRule"/>
</dbReference>
<dbReference type="GO" id="GO:0046933">
    <property type="term" value="F:proton-transporting ATP synthase activity, rotational mechanism"/>
    <property type="evidence" value="ECO:0007669"/>
    <property type="project" value="UniProtKB-UniRule"/>
</dbReference>
<dbReference type="GO" id="GO:0046961">
    <property type="term" value="F:proton-transporting ATPase activity, rotational mechanism"/>
    <property type="evidence" value="ECO:0007669"/>
    <property type="project" value="InterPro"/>
</dbReference>
<dbReference type="GO" id="GO:0042777">
    <property type="term" value="P:proton motive force-driven plasma membrane ATP synthesis"/>
    <property type="evidence" value="ECO:0007669"/>
    <property type="project" value="UniProtKB-UniRule"/>
</dbReference>
<dbReference type="FunFam" id="1.10.287.3240:FF:000007">
    <property type="entry name" value="V-type ATP synthase subunit D"/>
    <property type="match status" value="1"/>
</dbReference>
<dbReference type="Gene3D" id="1.10.287.3240">
    <property type="match status" value="1"/>
</dbReference>
<dbReference type="HAMAP" id="MF_00271">
    <property type="entry name" value="ATP_synth_D_arch"/>
    <property type="match status" value="1"/>
</dbReference>
<dbReference type="InterPro" id="IPR002699">
    <property type="entry name" value="V_ATPase_D"/>
</dbReference>
<dbReference type="NCBIfam" id="NF001546">
    <property type="entry name" value="PRK00373.1-5"/>
    <property type="match status" value="1"/>
</dbReference>
<dbReference type="NCBIfam" id="TIGR00309">
    <property type="entry name" value="V_ATPase_subD"/>
    <property type="match status" value="1"/>
</dbReference>
<dbReference type="PANTHER" id="PTHR11671">
    <property type="entry name" value="V-TYPE ATP SYNTHASE SUBUNIT D"/>
    <property type="match status" value="1"/>
</dbReference>
<dbReference type="Pfam" id="PF01813">
    <property type="entry name" value="ATP-synt_D"/>
    <property type="match status" value="1"/>
</dbReference>
<evidence type="ECO:0000255" key="1">
    <source>
        <dbReference type="HAMAP-Rule" id="MF_00271"/>
    </source>
</evidence>
<accession>A8AUJ9</accession>
<organism>
    <name type="scientific">Streptococcus gordonii (strain Challis / ATCC 35105 / BCRC 15272 / CH1 / DL1 / V288)</name>
    <dbReference type="NCBI Taxonomy" id="467705"/>
    <lineage>
        <taxon>Bacteria</taxon>
        <taxon>Bacillati</taxon>
        <taxon>Bacillota</taxon>
        <taxon>Bacilli</taxon>
        <taxon>Lactobacillales</taxon>
        <taxon>Streptococcaceae</taxon>
        <taxon>Streptococcus</taxon>
    </lineage>
</organism>
<gene>
    <name evidence="1" type="primary">atpD</name>
    <name type="ordered locus">SGO_0137</name>
</gene>
<sequence>MTRLNVKPTRMELNNLKARLKTAVRGHKLLKDKRDELMRRFIESVRENNQLRQKVESALVGHLQDFVMAKALESDLMVEEIFAVPMREVNLHVETENIMSVRVPKMHAHIDNPYGDDEGDVVYSYVASNSQMDETIESMSDLLPDLLRLAEIEKSCQLMADEIEKTRRRVNGLEYATIPDLKETIYYIEMKLEEAERASLVRMMKVK</sequence>